<evidence type="ECO:0000255" key="1">
    <source>
        <dbReference type="HAMAP-Rule" id="MF_00161"/>
    </source>
</evidence>
<feature type="chain" id="PRO_1000071549" description="Lipoprotein signal peptidase">
    <location>
        <begin position="1"/>
        <end position="171"/>
    </location>
</feature>
<feature type="transmembrane region" description="Helical" evidence="1">
    <location>
        <begin position="15"/>
        <end position="35"/>
    </location>
</feature>
<feature type="transmembrane region" description="Helical" evidence="1">
    <location>
        <begin position="47"/>
        <end position="67"/>
    </location>
</feature>
<feature type="transmembrane region" description="Helical" evidence="1">
    <location>
        <begin position="72"/>
        <end position="92"/>
    </location>
</feature>
<feature type="transmembrane region" description="Helical" evidence="1">
    <location>
        <begin position="107"/>
        <end position="127"/>
    </location>
</feature>
<feature type="transmembrane region" description="Helical" evidence="1">
    <location>
        <begin position="141"/>
        <end position="161"/>
    </location>
</feature>
<feature type="active site" evidence="1">
    <location>
        <position position="128"/>
    </location>
</feature>
<feature type="active site" evidence="1">
    <location>
        <position position="146"/>
    </location>
</feature>
<dbReference type="EC" id="3.4.23.36" evidence="1"/>
<dbReference type="EMBL" id="CP000627">
    <property type="protein sequence ID" value="ABQ20763.1"/>
    <property type="molecule type" value="Genomic_DNA"/>
</dbReference>
<dbReference type="EMBL" id="CP001235">
    <property type="protein sequence ID" value="ACP08718.1"/>
    <property type="molecule type" value="Genomic_DNA"/>
</dbReference>
<dbReference type="RefSeq" id="WP_000071973.1">
    <property type="nucleotide sequence ID" value="NZ_JAACZH010000006.1"/>
</dbReference>
<dbReference type="SMR" id="A5F8Z4"/>
<dbReference type="MEROPS" id="A08.001"/>
<dbReference type="GeneID" id="88783947"/>
<dbReference type="KEGG" id="vco:VC0395_A0215"/>
<dbReference type="KEGG" id="vcr:VC395_0700"/>
<dbReference type="PATRIC" id="fig|345073.21.peg.682"/>
<dbReference type="eggNOG" id="COG0597">
    <property type="taxonomic scope" value="Bacteria"/>
</dbReference>
<dbReference type="HOGENOM" id="CLU_083252_4_0_6"/>
<dbReference type="OrthoDB" id="9810259at2"/>
<dbReference type="UniPathway" id="UPA00665"/>
<dbReference type="Proteomes" id="UP000000249">
    <property type="component" value="Chromosome 2"/>
</dbReference>
<dbReference type="GO" id="GO:0005886">
    <property type="term" value="C:plasma membrane"/>
    <property type="evidence" value="ECO:0007669"/>
    <property type="project" value="UniProtKB-SubCell"/>
</dbReference>
<dbReference type="GO" id="GO:0004190">
    <property type="term" value="F:aspartic-type endopeptidase activity"/>
    <property type="evidence" value="ECO:0007669"/>
    <property type="project" value="UniProtKB-UniRule"/>
</dbReference>
<dbReference type="GO" id="GO:0006508">
    <property type="term" value="P:proteolysis"/>
    <property type="evidence" value="ECO:0007669"/>
    <property type="project" value="UniProtKB-KW"/>
</dbReference>
<dbReference type="HAMAP" id="MF_00161">
    <property type="entry name" value="LspA"/>
    <property type="match status" value="1"/>
</dbReference>
<dbReference type="InterPro" id="IPR001872">
    <property type="entry name" value="Peptidase_A8"/>
</dbReference>
<dbReference type="NCBIfam" id="TIGR00077">
    <property type="entry name" value="lspA"/>
    <property type="match status" value="1"/>
</dbReference>
<dbReference type="PANTHER" id="PTHR33695">
    <property type="entry name" value="LIPOPROTEIN SIGNAL PEPTIDASE"/>
    <property type="match status" value="1"/>
</dbReference>
<dbReference type="PANTHER" id="PTHR33695:SF1">
    <property type="entry name" value="LIPOPROTEIN SIGNAL PEPTIDASE"/>
    <property type="match status" value="1"/>
</dbReference>
<dbReference type="Pfam" id="PF01252">
    <property type="entry name" value="Peptidase_A8"/>
    <property type="match status" value="1"/>
</dbReference>
<dbReference type="PRINTS" id="PR00781">
    <property type="entry name" value="LIPOSIGPTASE"/>
</dbReference>
<dbReference type="PROSITE" id="PS00855">
    <property type="entry name" value="SPASE_II"/>
    <property type="match status" value="1"/>
</dbReference>
<comment type="function">
    <text evidence="1">This protein specifically catalyzes the removal of signal peptides from prolipoproteins.</text>
</comment>
<comment type="catalytic activity">
    <reaction evidence="1">
        <text>Release of signal peptides from bacterial membrane prolipoproteins. Hydrolyzes -Xaa-Yaa-Zaa-|-(S,diacylglyceryl)Cys-, in which Xaa is hydrophobic (preferably Leu), and Yaa (Ala or Ser) and Zaa (Gly or Ala) have small, neutral side chains.</text>
        <dbReference type="EC" id="3.4.23.36"/>
    </reaction>
</comment>
<comment type="pathway">
    <text evidence="1">Protein modification; lipoprotein biosynthesis (signal peptide cleavage).</text>
</comment>
<comment type="subcellular location">
    <subcellularLocation>
        <location evidence="1">Cell inner membrane</location>
        <topology evidence="1">Multi-pass membrane protein</topology>
    </subcellularLocation>
</comment>
<comment type="similarity">
    <text evidence="1">Belongs to the peptidase A8 family.</text>
</comment>
<reference key="1">
    <citation type="submission" date="2007-03" db="EMBL/GenBank/DDBJ databases">
        <authorList>
            <person name="Heidelberg J."/>
        </authorList>
    </citation>
    <scope>NUCLEOTIDE SEQUENCE [LARGE SCALE GENOMIC DNA]</scope>
    <source>
        <strain>ATCC 39541 / Classical Ogawa 395 / O395</strain>
    </source>
</reference>
<reference key="2">
    <citation type="journal article" date="2008" name="PLoS ONE">
        <title>A recalibrated molecular clock and independent origins for the cholera pandemic clones.</title>
        <authorList>
            <person name="Feng L."/>
            <person name="Reeves P.R."/>
            <person name="Lan R."/>
            <person name="Ren Y."/>
            <person name="Gao C."/>
            <person name="Zhou Z."/>
            <person name="Ren Y."/>
            <person name="Cheng J."/>
            <person name="Wang W."/>
            <person name="Wang J."/>
            <person name="Qian W."/>
            <person name="Li D."/>
            <person name="Wang L."/>
        </authorList>
    </citation>
    <scope>NUCLEOTIDE SEQUENCE [LARGE SCALE GENOMIC DNA]</scope>
    <source>
        <strain>ATCC 39541 / Classical Ogawa 395 / O395</strain>
    </source>
</reference>
<name>LSPA_VIBC3</name>
<accession>A5F8Z4</accession>
<accession>C3LXZ4</accession>
<sequence length="171" mass="19420">MSNSSLTLKQSGLRWLWLALLVFIADITIKLIVMDNMGYGWANRIEVLPFFNLLYVHNYGAAFSFLSDQEGWQRWLFTGIAFVVTGMLAYWMRRLPASDKWNNIAYALIIGGAVGNVFDRIVHGFVVDYLDFYWGTYHWPAFNLADSTICIGAAMIILDGFRAKKSAPSQS</sequence>
<organism>
    <name type="scientific">Vibrio cholerae serotype O1 (strain ATCC 39541 / Classical Ogawa 395 / O395)</name>
    <dbReference type="NCBI Taxonomy" id="345073"/>
    <lineage>
        <taxon>Bacteria</taxon>
        <taxon>Pseudomonadati</taxon>
        <taxon>Pseudomonadota</taxon>
        <taxon>Gammaproteobacteria</taxon>
        <taxon>Vibrionales</taxon>
        <taxon>Vibrionaceae</taxon>
        <taxon>Vibrio</taxon>
    </lineage>
</organism>
<proteinExistence type="inferred from homology"/>
<protein>
    <recommendedName>
        <fullName evidence="1">Lipoprotein signal peptidase</fullName>
        <ecNumber evidence="1">3.4.23.36</ecNumber>
    </recommendedName>
    <alternativeName>
        <fullName evidence="1">Prolipoprotein signal peptidase</fullName>
    </alternativeName>
    <alternativeName>
        <fullName evidence="1">Signal peptidase II</fullName>
        <shortName evidence="1">SPase II</shortName>
    </alternativeName>
</protein>
<gene>
    <name evidence="1" type="primary">lspA</name>
    <name type="ordered locus">VC0395_A0215</name>
    <name type="ordered locus">VC395_0700</name>
</gene>
<keyword id="KW-0064">Aspartyl protease</keyword>
<keyword id="KW-0997">Cell inner membrane</keyword>
<keyword id="KW-1003">Cell membrane</keyword>
<keyword id="KW-0378">Hydrolase</keyword>
<keyword id="KW-0472">Membrane</keyword>
<keyword id="KW-0645">Protease</keyword>
<keyword id="KW-0812">Transmembrane</keyword>
<keyword id="KW-1133">Transmembrane helix</keyword>